<protein>
    <recommendedName>
        <fullName evidence="1">Dual-action ribosomal maturation protein DarP</fullName>
    </recommendedName>
    <alternativeName>
        <fullName evidence="1">Large ribosomal subunit assembly factor DarP</fullName>
    </alternativeName>
</protein>
<dbReference type="EMBL" id="CP000680">
    <property type="protein sequence ID" value="ABP83632.1"/>
    <property type="molecule type" value="Genomic_DNA"/>
</dbReference>
<dbReference type="SMR" id="A4XQL6"/>
<dbReference type="STRING" id="399739.Pmen_0864"/>
<dbReference type="KEGG" id="pmy:Pmen_0864"/>
<dbReference type="PATRIC" id="fig|399739.8.peg.873"/>
<dbReference type="eggNOG" id="COG3028">
    <property type="taxonomic scope" value="Bacteria"/>
</dbReference>
<dbReference type="HOGENOM" id="CLU_106757_4_0_6"/>
<dbReference type="OrthoDB" id="5293604at2"/>
<dbReference type="GO" id="GO:0005829">
    <property type="term" value="C:cytosol"/>
    <property type="evidence" value="ECO:0007669"/>
    <property type="project" value="TreeGrafter"/>
</dbReference>
<dbReference type="GO" id="GO:0043022">
    <property type="term" value="F:ribosome binding"/>
    <property type="evidence" value="ECO:0007669"/>
    <property type="project" value="UniProtKB-UniRule"/>
</dbReference>
<dbReference type="GO" id="GO:0019843">
    <property type="term" value="F:rRNA binding"/>
    <property type="evidence" value="ECO:0007669"/>
    <property type="project" value="UniProtKB-UniRule"/>
</dbReference>
<dbReference type="GO" id="GO:1902626">
    <property type="term" value="P:assembly of large subunit precursor of preribosome"/>
    <property type="evidence" value="ECO:0007669"/>
    <property type="project" value="UniProtKB-UniRule"/>
</dbReference>
<dbReference type="CDD" id="cd16331">
    <property type="entry name" value="YjgA-like"/>
    <property type="match status" value="1"/>
</dbReference>
<dbReference type="FunFam" id="1.10.60.30:FF:000002">
    <property type="entry name" value="UPF0307 protein YjgA"/>
    <property type="match status" value="1"/>
</dbReference>
<dbReference type="Gene3D" id="1.10.60.30">
    <property type="entry name" value="PSPTO4464-like domains"/>
    <property type="match status" value="2"/>
</dbReference>
<dbReference type="HAMAP" id="MF_00765">
    <property type="entry name" value="DarP"/>
    <property type="match status" value="1"/>
</dbReference>
<dbReference type="InterPro" id="IPR006839">
    <property type="entry name" value="DarP"/>
</dbReference>
<dbReference type="InterPro" id="IPR023153">
    <property type="entry name" value="DarP_sf"/>
</dbReference>
<dbReference type="NCBIfam" id="NF003593">
    <property type="entry name" value="PRK05255.1-1"/>
    <property type="match status" value="1"/>
</dbReference>
<dbReference type="PANTHER" id="PTHR38101">
    <property type="entry name" value="UPF0307 PROTEIN YJGA"/>
    <property type="match status" value="1"/>
</dbReference>
<dbReference type="PANTHER" id="PTHR38101:SF1">
    <property type="entry name" value="UPF0307 PROTEIN YJGA"/>
    <property type="match status" value="1"/>
</dbReference>
<dbReference type="Pfam" id="PF04751">
    <property type="entry name" value="DarP"/>
    <property type="match status" value="1"/>
</dbReference>
<dbReference type="PIRSF" id="PIRSF016183">
    <property type="entry name" value="UCP016183"/>
    <property type="match status" value="1"/>
</dbReference>
<dbReference type="SUPFAM" id="SSF158710">
    <property type="entry name" value="PSPTO4464-like"/>
    <property type="match status" value="1"/>
</dbReference>
<feature type="chain" id="PRO_1000062223" description="Dual-action ribosomal maturation protein DarP">
    <location>
        <begin position="1"/>
        <end position="172"/>
    </location>
</feature>
<name>DARP_ECTM1</name>
<proteinExistence type="inferred from homology"/>
<comment type="function">
    <text evidence="1">Member of a network of 50S ribosomal subunit biogenesis factors which assembles along the 30S-50S interface, preventing incorrect 23S rRNA structures from forming. Promotes peptidyl transferase center (PTC) maturation.</text>
</comment>
<comment type="subcellular location">
    <subcellularLocation>
        <location evidence="1">Cytoplasm</location>
    </subcellularLocation>
    <text evidence="1">Associates with late stage pre-50S ribosomal subunits.</text>
</comment>
<comment type="similarity">
    <text evidence="1">Belongs to the DarP family.</text>
</comment>
<reference key="1">
    <citation type="submission" date="2007-04" db="EMBL/GenBank/DDBJ databases">
        <title>Complete sequence of Pseudomonas mendocina ymp.</title>
        <authorList>
            <consortium name="US DOE Joint Genome Institute"/>
            <person name="Copeland A."/>
            <person name="Lucas S."/>
            <person name="Lapidus A."/>
            <person name="Barry K."/>
            <person name="Glavina del Rio T."/>
            <person name="Dalin E."/>
            <person name="Tice H."/>
            <person name="Pitluck S."/>
            <person name="Kiss H."/>
            <person name="Brettin T."/>
            <person name="Detter J.C."/>
            <person name="Bruce D."/>
            <person name="Han C."/>
            <person name="Schmutz J."/>
            <person name="Larimer F."/>
            <person name="Land M."/>
            <person name="Hauser L."/>
            <person name="Kyrpides N."/>
            <person name="Mikhailova N."/>
            <person name="Hersman L."/>
            <person name="Dubois J."/>
            <person name="Maurice P."/>
            <person name="Richardson P."/>
        </authorList>
    </citation>
    <scope>NUCLEOTIDE SEQUENCE [LARGE SCALE GENOMIC DNA]</scope>
    <source>
        <strain>ymp</strain>
    </source>
</reference>
<keyword id="KW-0963">Cytoplasm</keyword>
<keyword id="KW-0690">Ribosome biogenesis</keyword>
<keyword id="KW-0694">RNA-binding</keyword>
<keyword id="KW-0699">rRNA-binding</keyword>
<gene>
    <name evidence="1" type="primary">darP</name>
    <name type="ordered locus">Pmen_0864</name>
</gene>
<accession>A4XQL6</accession>
<sequence length="172" mass="19843">MSDSYDDFSLEKSKSQVKRELHALQDLGERLTTLKADLLAKLPLTDALRRALAEAPKHTANAARKRHIQFIGKLMREQDIEAILALIDQVDSSTREYNERFHALERWRDRLIGEGDSALEGFVELYPDADRQHLRGLIRHAQHEAAHNKPPAAARKVFKYIRELDEIQRGLR</sequence>
<organism>
    <name type="scientific">Ectopseudomonas mendocina (strain ymp)</name>
    <name type="common">Pseudomonas mendocina</name>
    <dbReference type="NCBI Taxonomy" id="399739"/>
    <lineage>
        <taxon>Bacteria</taxon>
        <taxon>Pseudomonadati</taxon>
        <taxon>Pseudomonadota</taxon>
        <taxon>Gammaproteobacteria</taxon>
        <taxon>Pseudomonadales</taxon>
        <taxon>Pseudomonadaceae</taxon>
        <taxon>Ectopseudomonas</taxon>
    </lineage>
</organism>
<evidence type="ECO:0000255" key="1">
    <source>
        <dbReference type="HAMAP-Rule" id="MF_00765"/>
    </source>
</evidence>